<feature type="signal peptide" evidence="2">
    <location>
        <begin position="1"/>
        <end position="22"/>
    </location>
</feature>
<feature type="chain" id="PRO_0000021017" description="Curli production assembly/transport component CsgE">
    <location>
        <begin position="23"/>
        <end position="131"/>
    </location>
</feature>
<reference key="1">
    <citation type="journal article" date="2001" name="Nature">
        <title>Complete genome sequence of a multiple drug resistant Salmonella enterica serovar Typhi CT18.</title>
        <authorList>
            <person name="Parkhill J."/>
            <person name="Dougan G."/>
            <person name="James K.D."/>
            <person name="Thomson N.R."/>
            <person name="Pickard D."/>
            <person name="Wain J."/>
            <person name="Churcher C.M."/>
            <person name="Mungall K.L."/>
            <person name="Bentley S.D."/>
            <person name="Holden M.T.G."/>
            <person name="Sebaihia M."/>
            <person name="Baker S."/>
            <person name="Basham D."/>
            <person name="Brooks K."/>
            <person name="Chillingworth T."/>
            <person name="Connerton P."/>
            <person name="Cronin A."/>
            <person name="Davis P."/>
            <person name="Davies R.M."/>
            <person name="Dowd L."/>
            <person name="White N."/>
            <person name="Farrar J."/>
            <person name="Feltwell T."/>
            <person name="Hamlin N."/>
            <person name="Haque A."/>
            <person name="Hien T.T."/>
            <person name="Holroyd S."/>
            <person name="Jagels K."/>
            <person name="Krogh A."/>
            <person name="Larsen T.S."/>
            <person name="Leather S."/>
            <person name="Moule S."/>
            <person name="O'Gaora P."/>
            <person name="Parry C."/>
            <person name="Quail M.A."/>
            <person name="Rutherford K.M."/>
            <person name="Simmonds M."/>
            <person name="Skelton J."/>
            <person name="Stevens K."/>
            <person name="Whitehead S."/>
            <person name="Barrell B.G."/>
        </authorList>
    </citation>
    <scope>NUCLEOTIDE SEQUENCE [LARGE SCALE GENOMIC DNA]</scope>
    <source>
        <strain>CT18</strain>
    </source>
</reference>
<reference key="2">
    <citation type="journal article" date="2003" name="J. Bacteriol.">
        <title>Comparative genomics of Salmonella enterica serovar Typhi strains Ty2 and CT18.</title>
        <authorList>
            <person name="Deng W."/>
            <person name="Liou S.-R."/>
            <person name="Plunkett G. III"/>
            <person name="Mayhew G.F."/>
            <person name="Rose D.J."/>
            <person name="Burland V."/>
            <person name="Kodoyianni V."/>
            <person name="Schwartz D.C."/>
            <person name="Blattner F.R."/>
        </authorList>
    </citation>
    <scope>NUCLEOTIDE SEQUENCE [LARGE SCALE GENOMIC DNA]</scope>
    <source>
        <strain>ATCC 700931 / Ty2</strain>
    </source>
</reference>
<gene>
    <name type="primary">csgE</name>
    <name type="ordered locus">STY1178</name>
    <name type="ordered locus">t1779</name>
</gene>
<proteinExistence type="inferred from homology"/>
<evidence type="ECO:0000250" key="1"/>
<evidence type="ECO:0000255" key="2"/>
<protein>
    <recommendedName>
        <fullName>Curli production assembly/transport component CsgE</fullName>
    </recommendedName>
</protein>
<sequence length="131" mass="15147">MKRYLTWIVAAELLFATGNLHANEVEVEVPGLLTDHTVSSIGHEFYRAFSDKWESEYTGNLTINERPSARWGSWITITVNQDVIFQTFLFPMKRDFEKTVVFALAQTEEALNRRQIDQTLLSTSDLARDEF</sequence>
<organism>
    <name type="scientific">Salmonella typhi</name>
    <dbReference type="NCBI Taxonomy" id="90370"/>
    <lineage>
        <taxon>Bacteria</taxon>
        <taxon>Pseudomonadati</taxon>
        <taxon>Pseudomonadota</taxon>
        <taxon>Gammaproteobacteria</taxon>
        <taxon>Enterobacterales</taxon>
        <taxon>Enterobacteriaceae</taxon>
        <taxon>Salmonella</taxon>
    </lineage>
</organism>
<keyword id="KW-0732">Signal</keyword>
<accession>P0A201</accession>
<accession>O54293</accession>
<comment type="function">
    <text evidence="1">May be involved in the biogenesis of curli organelles.</text>
</comment>
<dbReference type="EMBL" id="AL513382">
    <property type="protein sequence ID" value="CAD08265.1"/>
    <property type="molecule type" value="Genomic_DNA"/>
</dbReference>
<dbReference type="EMBL" id="AE014613">
    <property type="protein sequence ID" value="AAO69402.1"/>
    <property type="molecule type" value="Genomic_DNA"/>
</dbReference>
<dbReference type="RefSeq" id="NP_455635.1">
    <property type="nucleotide sequence ID" value="NC_003198.1"/>
</dbReference>
<dbReference type="RefSeq" id="WP_000833307.1">
    <property type="nucleotide sequence ID" value="NZ_WSUR01000018.1"/>
</dbReference>
<dbReference type="SMR" id="P0A201"/>
<dbReference type="STRING" id="220341.gene:17585145"/>
<dbReference type="KEGG" id="stt:t1779"/>
<dbReference type="KEGG" id="sty:STY1178"/>
<dbReference type="PATRIC" id="fig|220341.7.peg.1178"/>
<dbReference type="eggNOG" id="ENOG502ZPXX">
    <property type="taxonomic scope" value="Bacteria"/>
</dbReference>
<dbReference type="HOGENOM" id="CLU_131424_0_0_6"/>
<dbReference type="OMA" id="VGHDFYR"/>
<dbReference type="OrthoDB" id="6869495at2"/>
<dbReference type="Proteomes" id="UP000000541">
    <property type="component" value="Chromosome"/>
</dbReference>
<dbReference type="Proteomes" id="UP000002670">
    <property type="component" value="Chromosome"/>
</dbReference>
<dbReference type="InterPro" id="IPR018900">
    <property type="entry name" value="Curli_CsgE"/>
</dbReference>
<dbReference type="NCBIfam" id="NF007701">
    <property type="entry name" value="PRK10386.1"/>
    <property type="match status" value="1"/>
</dbReference>
<dbReference type="Pfam" id="PF10627">
    <property type="entry name" value="CsgE"/>
    <property type="match status" value="1"/>
</dbReference>
<name>CSGE_SALTI</name>